<dbReference type="MaizeGDB" id="123926"/>
<dbReference type="InParanoid" id="P80610"/>
<dbReference type="Proteomes" id="UP000007305">
    <property type="component" value="Unplaced"/>
</dbReference>
<organism>
    <name type="scientific">Zea mays</name>
    <name type="common">Maize</name>
    <dbReference type="NCBI Taxonomy" id="4577"/>
    <lineage>
        <taxon>Eukaryota</taxon>
        <taxon>Viridiplantae</taxon>
        <taxon>Streptophyta</taxon>
        <taxon>Embryophyta</taxon>
        <taxon>Tracheophyta</taxon>
        <taxon>Spermatophyta</taxon>
        <taxon>Magnoliopsida</taxon>
        <taxon>Liliopsida</taxon>
        <taxon>Poales</taxon>
        <taxon>Poaceae</taxon>
        <taxon>PACMAD clade</taxon>
        <taxon>Panicoideae</taxon>
        <taxon>Andropogonodae</taxon>
        <taxon>Andropogoneae</taxon>
        <taxon>Tripsacinae</taxon>
        <taxon>Zea</taxon>
    </lineage>
</organism>
<keyword id="KW-0903">Direct protein sequencing</keyword>
<keyword id="KW-1185">Reference proteome</keyword>
<sequence length="14" mass="1393">ADEGFSATVRNGAV</sequence>
<accession>P80610</accession>
<reference key="1">
    <citation type="journal article" date="1996" name="Theor. Appl. Genet.">
        <title>The maize two dimensional gel protein database: towards an integrated genome analysis program.</title>
        <authorList>
            <person name="Touzet P."/>
            <person name="Riccardi F."/>
            <person name="Morin C."/>
            <person name="Damerval C."/>
            <person name="Huet J.-C."/>
            <person name="Pernollet J.-C."/>
            <person name="Zivy M."/>
            <person name="de Vienne D."/>
        </authorList>
        <dbReference type="AGRICOLA" id="IND20551642"/>
    </citation>
    <scope>PROTEIN SEQUENCE</scope>
    <source>
        <tissue>Coleoptile</tissue>
    </source>
</reference>
<protein>
    <recommendedName>
        <fullName>Unknown protein from spot 128 of 2D-PAGE of etiolated coleoptile</fullName>
    </recommendedName>
</protein>
<feature type="chain" id="PRO_0000055502" description="Unknown protein from spot 128 of 2D-PAGE of etiolated coleoptile">
    <location>
        <begin position="1" status="less than"/>
        <end position="14" status="greater than"/>
    </location>
</feature>
<feature type="non-terminal residue">
    <location>
        <position position="1"/>
    </location>
</feature>
<feature type="non-terminal residue">
    <location>
        <position position="14"/>
    </location>
</feature>
<name>UC04_MAIZE</name>
<proteinExistence type="evidence at protein level"/>
<comment type="miscellaneous">
    <text>On the 2D-gel the determined pI of this unknown protein is: 6.8, its MW is: 34.6 kDa.</text>
</comment>